<name>IOLG_RHOE4</name>
<proteinExistence type="inferred from homology"/>
<accession>C0ZWI9</accession>
<dbReference type="EC" id="1.1.1.18" evidence="1"/>
<dbReference type="EMBL" id="AP008957">
    <property type="protein sequence ID" value="BAH32724.1"/>
    <property type="molecule type" value="Genomic_DNA"/>
</dbReference>
<dbReference type="RefSeq" id="WP_020906996.1">
    <property type="nucleotide sequence ID" value="NC_012490.1"/>
</dbReference>
<dbReference type="SMR" id="C0ZWI9"/>
<dbReference type="KEGG" id="rer:RER_20160"/>
<dbReference type="PATRIC" id="fig|234621.6.peg.2516"/>
<dbReference type="eggNOG" id="COG0673">
    <property type="taxonomic scope" value="Bacteria"/>
</dbReference>
<dbReference type="HOGENOM" id="CLU_023194_0_1_11"/>
<dbReference type="Proteomes" id="UP000002204">
    <property type="component" value="Chromosome"/>
</dbReference>
<dbReference type="GO" id="GO:0050112">
    <property type="term" value="F:inositol 2-dehydrogenase (NAD+) activity"/>
    <property type="evidence" value="ECO:0007669"/>
    <property type="project" value="UniProtKB-UniRule"/>
</dbReference>
<dbReference type="GO" id="GO:0000166">
    <property type="term" value="F:nucleotide binding"/>
    <property type="evidence" value="ECO:0007669"/>
    <property type="project" value="InterPro"/>
</dbReference>
<dbReference type="GO" id="GO:0019310">
    <property type="term" value="P:inositol catabolic process"/>
    <property type="evidence" value="ECO:0007669"/>
    <property type="project" value="UniProtKB-UniRule"/>
</dbReference>
<dbReference type="Gene3D" id="3.30.360.10">
    <property type="entry name" value="Dihydrodipicolinate Reductase, domain 2"/>
    <property type="match status" value="1"/>
</dbReference>
<dbReference type="Gene3D" id="3.40.50.720">
    <property type="entry name" value="NAD(P)-binding Rossmann-like Domain"/>
    <property type="match status" value="1"/>
</dbReference>
<dbReference type="HAMAP" id="MF_01671">
    <property type="entry name" value="IolG"/>
    <property type="match status" value="1"/>
</dbReference>
<dbReference type="InterPro" id="IPR050424">
    <property type="entry name" value="Gfo-Idh-MocA_inositol_DH"/>
</dbReference>
<dbReference type="InterPro" id="IPR004104">
    <property type="entry name" value="Gfo/Idh/MocA-like_OxRdtase_C"/>
</dbReference>
<dbReference type="InterPro" id="IPR000683">
    <property type="entry name" value="Gfo/Idh/MocA-like_OxRdtase_N"/>
</dbReference>
<dbReference type="InterPro" id="IPR023794">
    <property type="entry name" value="MI/DCI_dehydrogenase"/>
</dbReference>
<dbReference type="InterPro" id="IPR036291">
    <property type="entry name" value="NAD(P)-bd_dom_sf"/>
</dbReference>
<dbReference type="PANTHER" id="PTHR43593">
    <property type="match status" value="1"/>
</dbReference>
<dbReference type="PANTHER" id="PTHR43593:SF1">
    <property type="entry name" value="INOSITOL 2-DEHYDROGENASE"/>
    <property type="match status" value="1"/>
</dbReference>
<dbReference type="Pfam" id="PF01408">
    <property type="entry name" value="GFO_IDH_MocA"/>
    <property type="match status" value="1"/>
</dbReference>
<dbReference type="Pfam" id="PF02894">
    <property type="entry name" value="GFO_IDH_MocA_C"/>
    <property type="match status" value="1"/>
</dbReference>
<dbReference type="SUPFAM" id="SSF55347">
    <property type="entry name" value="Glyceraldehyde-3-phosphate dehydrogenase-like, C-terminal domain"/>
    <property type="match status" value="1"/>
</dbReference>
<dbReference type="SUPFAM" id="SSF51735">
    <property type="entry name" value="NAD(P)-binding Rossmann-fold domains"/>
    <property type="match status" value="1"/>
</dbReference>
<sequence>MSDNQDLRIAVLGVGIMGADHVDRITNKIGGARVTVVNDYSLARAEEIAALTPGSRVVVDPFDAIAAEDVDAVVLATPGPTHEKQVLACLEAGKPVLCEKPLTTDADSSLAIVKAEAALGKKLIQVGFMRRFDHEYTQLKYLIDSGDLGRPLVVHCAHRNPAVPNGFDSAMIVKDSLVHEVDVTRFLLDEEITSVQIIRPSANSLAPEGIQDPQIAIFETESGRHVDAEVFVTTGVAYEVRTEVVGELGSAMIGLDVGLIRKTKPGNWGGQITPGFRERFGQAYDTEFARWIKAVKTGAGTGNYIDGPGAWDGYAAAAVCAAGVKSLETGQRVVVDMVARDSVAGA</sequence>
<organism>
    <name type="scientific">Rhodococcus erythropolis (strain PR4 / NBRC 100887)</name>
    <dbReference type="NCBI Taxonomy" id="234621"/>
    <lineage>
        <taxon>Bacteria</taxon>
        <taxon>Bacillati</taxon>
        <taxon>Actinomycetota</taxon>
        <taxon>Actinomycetes</taxon>
        <taxon>Mycobacteriales</taxon>
        <taxon>Nocardiaceae</taxon>
        <taxon>Rhodococcus</taxon>
        <taxon>Rhodococcus erythropolis group</taxon>
    </lineage>
</organism>
<protein>
    <recommendedName>
        <fullName evidence="1">Inositol 2-dehydrogenase</fullName>
        <ecNumber evidence="1">1.1.1.18</ecNumber>
    </recommendedName>
    <alternativeName>
        <fullName evidence="1">Myo-inositol 2-dehydrogenase</fullName>
        <shortName evidence="1">MI 2-dehydrogenase</shortName>
    </alternativeName>
</protein>
<reference key="1">
    <citation type="submission" date="2005-03" db="EMBL/GenBank/DDBJ databases">
        <title>Comparison of the complete genome sequences of Rhodococcus erythropolis PR4 and Rhodococcus opacus B4.</title>
        <authorList>
            <person name="Takarada H."/>
            <person name="Sekine M."/>
            <person name="Hosoyama A."/>
            <person name="Yamada R."/>
            <person name="Fujisawa T."/>
            <person name="Omata S."/>
            <person name="Shimizu A."/>
            <person name="Tsukatani N."/>
            <person name="Tanikawa S."/>
            <person name="Fujita N."/>
            <person name="Harayama S."/>
        </authorList>
    </citation>
    <scope>NUCLEOTIDE SEQUENCE [LARGE SCALE GENOMIC DNA]</scope>
    <source>
        <strain>PR4 / NBRC 100887</strain>
    </source>
</reference>
<keyword id="KW-0520">NAD</keyword>
<keyword id="KW-0560">Oxidoreductase</keyword>
<gene>
    <name evidence="1" type="primary">iolG</name>
    <name type="ordered locus">RER_20160</name>
</gene>
<evidence type="ECO:0000255" key="1">
    <source>
        <dbReference type="HAMAP-Rule" id="MF_01671"/>
    </source>
</evidence>
<comment type="function">
    <text evidence="1">Involved in the oxidation of myo-inositol (MI) to 2-keto-myo-inositol (2KMI or 2-inosose).</text>
</comment>
<comment type="catalytic activity">
    <reaction evidence="1">
        <text>myo-inositol + NAD(+) = scyllo-inosose + NADH + H(+)</text>
        <dbReference type="Rhea" id="RHEA:16949"/>
        <dbReference type="ChEBI" id="CHEBI:15378"/>
        <dbReference type="ChEBI" id="CHEBI:17268"/>
        <dbReference type="ChEBI" id="CHEBI:17811"/>
        <dbReference type="ChEBI" id="CHEBI:57540"/>
        <dbReference type="ChEBI" id="CHEBI:57945"/>
        <dbReference type="EC" id="1.1.1.18"/>
    </reaction>
</comment>
<comment type="subunit">
    <text evidence="1">Homotetramer.</text>
</comment>
<comment type="similarity">
    <text evidence="1">Belongs to the Gfo/Idh/MocA family.</text>
</comment>
<feature type="chain" id="PRO_1000215886" description="Inositol 2-dehydrogenase">
    <location>
        <begin position="1"/>
        <end position="346"/>
    </location>
</feature>